<accession>B4TXQ6</accession>
<comment type="catalytic activity">
    <reaction evidence="1">
        <text>(S)-4-amino-5-oxopentanoate = 5-aminolevulinate</text>
        <dbReference type="Rhea" id="RHEA:14265"/>
        <dbReference type="ChEBI" id="CHEBI:57501"/>
        <dbReference type="ChEBI" id="CHEBI:356416"/>
        <dbReference type="EC" id="5.4.3.8"/>
    </reaction>
</comment>
<comment type="cofactor">
    <cofactor evidence="1">
        <name>pyridoxal 5'-phosphate</name>
        <dbReference type="ChEBI" id="CHEBI:597326"/>
    </cofactor>
</comment>
<comment type="pathway">
    <text evidence="1">Porphyrin-containing compound metabolism; protoporphyrin-IX biosynthesis; 5-aminolevulinate from L-glutamyl-tRNA(Glu): step 2/2.</text>
</comment>
<comment type="subunit">
    <text evidence="1">Homodimer.</text>
</comment>
<comment type="subcellular location">
    <subcellularLocation>
        <location evidence="1">Cytoplasm</location>
    </subcellularLocation>
</comment>
<comment type="similarity">
    <text evidence="1">Belongs to the class-III pyridoxal-phosphate-dependent aminotransferase family. HemL subfamily.</text>
</comment>
<evidence type="ECO:0000255" key="1">
    <source>
        <dbReference type="HAMAP-Rule" id="MF_00375"/>
    </source>
</evidence>
<protein>
    <recommendedName>
        <fullName evidence="1">Glutamate-1-semialdehyde 2,1-aminomutase</fullName>
        <shortName evidence="1">GSA</shortName>
        <ecNumber evidence="1">5.4.3.8</ecNumber>
    </recommendedName>
    <alternativeName>
        <fullName evidence="1">Glutamate-1-semialdehyde aminotransferase</fullName>
        <shortName evidence="1">GSA-AT</shortName>
    </alternativeName>
</protein>
<gene>
    <name evidence="1" type="primary">hemL</name>
    <name type="ordered locus">SeSA_A0224</name>
</gene>
<name>GSA_SALSV</name>
<organism>
    <name type="scientific">Salmonella schwarzengrund (strain CVM19633)</name>
    <dbReference type="NCBI Taxonomy" id="439843"/>
    <lineage>
        <taxon>Bacteria</taxon>
        <taxon>Pseudomonadati</taxon>
        <taxon>Pseudomonadota</taxon>
        <taxon>Gammaproteobacteria</taxon>
        <taxon>Enterobacterales</taxon>
        <taxon>Enterobacteriaceae</taxon>
        <taxon>Salmonella</taxon>
    </lineage>
</organism>
<keyword id="KW-0963">Cytoplasm</keyword>
<keyword id="KW-0413">Isomerase</keyword>
<keyword id="KW-0627">Porphyrin biosynthesis</keyword>
<keyword id="KW-0663">Pyridoxal phosphate</keyword>
<feature type="chain" id="PRO_1000121920" description="Glutamate-1-semialdehyde 2,1-aminomutase">
    <location>
        <begin position="1"/>
        <end position="426"/>
    </location>
</feature>
<feature type="modified residue" description="N6-(pyridoxal phosphate)lysine" evidence="1">
    <location>
        <position position="265"/>
    </location>
</feature>
<proteinExistence type="inferred from homology"/>
<reference key="1">
    <citation type="journal article" date="2011" name="J. Bacteriol.">
        <title>Comparative genomics of 28 Salmonella enterica isolates: evidence for CRISPR-mediated adaptive sublineage evolution.</title>
        <authorList>
            <person name="Fricke W.F."/>
            <person name="Mammel M.K."/>
            <person name="McDermott P.F."/>
            <person name="Tartera C."/>
            <person name="White D.G."/>
            <person name="Leclerc J.E."/>
            <person name="Ravel J."/>
            <person name="Cebula T.A."/>
        </authorList>
    </citation>
    <scope>NUCLEOTIDE SEQUENCE [LARGE SCALE GENOMIC DNA]</scope>
    <source>
        <strain>CVM19633</strain>
    </source>
</reference>
<dbReference type="EC" id="5.4.3.8" evidence="1"/>
<dbReference type="EMBL" id="CP001127">
    <property type="protein sequence ID" value="ACF88889.1"/>
    <property type="molecule type" value="Genomic_DNA"/>
</dbReference>
<dbReference type="RefSeq" id="WP_000045249.1">
    <property type="nucleotide sequence ID" value="NC_011094.1"/>
</dbReference>
<dbReference type="SMR" id="B4TXQ6"/>
<dbReference type="KEGG" id="sew:SeSA_A0224"/>
<dbReference type="HOGENOM" id="CLU_016922_1_5_6"/>
<dbReference type="UniPathway" id="UPA00251">
    <property type="reaction ID" value="UER00317"/>
</dbReference>
<dbReference type="Proteomes" id="UP000001865">
    <property type="component" value="Chromosome"/>
</dbReference>
<dbReference type="GO" id="GO:0005737">
    <property type="term" value="C:cytoplasm"/>
    <property type="evidence" value="ECO:0007669"/>
    <property type="project" value="UniProtKB-SubCell"/>
</dbReference>
<dbReference type="GO" id="GO:0042286">
    <property type="term" value="F:glutamate-1-semialdehyde 2,1-aminomutase activity"/>
    <property type="evidence" value="ECO:0007669"/>
    <property type="project" value="UniProtKB-UniRule"/>
</dbReference>
<dbReference type="GO" id="GO:0030170">
    <property type="term" value="F:pyridoxal phosphate binding"/>
    <property type="evidence" value="ECO:0007669"/>
    <property type="project" value="InterPro"/>
</dbReference>
<dbReference type="GO" id="GO:0008483">
    <property type="term" value="F:transaminase activity"/>
    <property type="evidence" value="ECO:0007669"/>
    <property type="project" value="InterPro"/>
</dbReference>
<dbReference type="GO" id="GO:0006782">
    <property type="term" value="P:protoporphyrinogen IX biosynthetic process"/>
    <property type="evidence" value="ECO:0007669"/>
    <property type="project" value="UniProtKB-UniRule"/>
</dbReference>
<dbReference type="CDD" id="cd00610">
    <property type="entry name" value="OAT_like"/>
    <property type="match status" value="1"/>
</dbReference>
<dbReference type="FunFam" id="3.40.640.10:FF:000021">
    <property type="entry name" value="Glutamate-1-semialdehyde 2,1-aminomutase"/>
    <property type="match status" value="1"/>
</dbReference>
<dbReference type="FunFam" id="3.90.1150.10:FF:000012">
    <property type="entry name" value="Glutamate-1-semialdehyde 2,1-aminomutase"/>
    <property type="match status" value="1"/>
</dbReference>
<dbReference type="Gene3D" id="3.90.1150.10">
    <property type="entry name" value="Aspartate Aminotransferase, domain 1"/>
    <property type="match status" value="1"/>
</dbReference>
<dbReference type="Gene3D" id="3.40.640.10">
    <property type="entry name" value="Type I PLP-dependent aspartate aminotransferase-like (Major domain)"/>
    <property type="match status" value="1"/>
</dbReference>
<dbReference type="HAMAP" id="MF_00375">
    <property type="entry name" value="HemL_aminotrans_3"/>
    <property type="match status" value="1"/>
</dbReference>
<dbReference type="InterPro" id="IPR004639">
    <property type="entry name" value="4pyrrol_synth_GluAld_NH2Trfase"/>
</dbReference>
<dbReference type="InterPro" id="IPR005814">
    <property type="entry name" value="Aminotrans_3"/>
</dbReference>
<dbReference type="InterPro" id="IPR049704">
    <property type="entry name" value="Aminotrans_3_PPA_site"/>
</dbReference>
<dbReference type="InterPro" id="IPR015424">
    <property type="entry name" value="PyrdxlP-dep_Trfase"/>
</dbReference>
<dbReference type="InterPro" id="IPR015421">
    <property type="entry name" value="PyrdxlP-dep_Trfase_major"/>
</dbReference>
<dbReference type="InterPro" id="IPR015422">
    <property type="entry name" value="PyrdxlP-dep_Trfase_small"/>
</dbReference>
<dbReference type="NCBIfam" id="TIGR00713">
    <property type="entry name" value="hemL"/>
    <property type="match status" value="1"/>
</dbReference>
<dbReference type="NCBIfam" id="NF000818">
    <property type="entry name" value="PRK00062.1"/>
    <property type="match status" value="1"/>
</dbReference>
<dbReference type="PANTHER" id="PTHR43713">
    <property type="entry name" value="GLUTAMATE-1-SEMIALDEHYDE 2,1-AMINOMUTASE"/>
    <property type="match status" value="1"/>
</dbReference>
<dbReference type="PANTHER" id="PTHR43713:SF3">
    <property type="entry name" value="GLUTAMATE-1-SEMIALDEHYDE 2,1-AMINOMUTASE 1, CHLOROPLASTIC-RELATED"/>
    <property type="match status" value="1"/>
</dbReference>
<dbReference type="Pfam" id="PF00202">
    <property type="entry name" value="Aminotran_3"/>
    <property type="match status" value="1"/>
</dbReference>
<dbReference type="SUPFAM" id="SSF53383">
    <property type="entry name" value="PLP-dependent transferases"/>
    <property type="match status" value="1"/>
</dbReference>
<dbReference type="PROSITE" id="PS00600">
    <property type="entry name" value="AA_TRANSFER_CLASS_3"/>
    <property type="match status" value="1"/>
</dbReference>
<sequence>MSKSENLYSAARELIPGGVNSPVRAFTGVGGTPLFIEKADGAYLYDVDGKAYIDYVGSWGPMVLGHNHPAIRNAVIEAAERGLSFGAPTEMEVKMAELVTNLVPTMDMVRMVNSGTEATMSAIRLARGFTGRDKIIKFEGCYHGHADCLLVKAGSGALTLGQPNSPGVPADFAKHTLTCTYNDLASVRAAFEQYPQEIACIIVEPVAGNMNCVPPLPEFLPGLRALCDEFGALLIIDEVMTGFRVALAGAQDYYGVVPDLTCLGKIIGGGMPVGAFGGRRDVMDALAPTGPVYQAGTLSGNPIAMAAGFACLNEVAQPGIHETLDELTTRLAEGLLEAAEEANIPLVVNHVGGMFGIFFTDAESVTCYQDVMACDVERFKRFFHLMLEEGVYLAPSAFEAGFMSVAHSMDDINNTIDAARRVFAKL</sequence>